<dbReference type="EC" id="2.7.1.170" evidence="1"/>
<dbReference type="EMBL" id="CP000362">
    <property type="protein sequence ID" value="ABG32653.1"/>
    <property type="molecule type" value="Genomic_DNA"/>
</dbReference>
<dbReference type="RefSeq" id="WP_011569269.1">
    <property type="nucleotide sequence ID" value="NC_008209.1"/>
</dbReference>
<dbReference type="SMR" id="Q164E0"/>
<dbReference type="STRING" id="375451.RD1_3145"/>
<dbReference type="KEGG" id="rde:RD1_3145"/>
<dbReference type="eggNOG" id="COG2377">
    <property type="taxonomic scope" value="Bacteria"/>
</dbReference>
<dbReference type="HOGENOM" id="CLU_038782_3_0_5"/>
<dbReference type="OrthoDB" id="9763949at2"/>
<dbReference type="UniPathway" id="UPA00343"/>
<dbReference type="UniPathway" id="UPA00544"/>
<dbReference type="Proteomes" id="UP000007029">
    <property type="component" value="Chromosome"/>
</dbReference>
<dbReference type="GO" id="GO:0005524">
    <property type="term" value="F:ATP binding"/>
    <property type="evidence" value="ECO:0007669"/>
    <property type="project" value="UniProtKB-UniRule"/>
</dbReference>
<dbReference type="GO" id="GO:0016301">
    <property type="term" value="F:kinase activity"/>
    <property type="evidence" value="ECO:0007669"/>
    <property type="project" value="UniProtKB-KW"/>
</dbReference>
<dbReference type="GO" id="GO:0016773">
    <property type="term" value="F:phosphotransferase activity, alcohol group as acceptor"/>
    <property type="evidence" value="ECO:0007669"/>
    <property type="project" value="UniProtKB-UniRule"/>
</dbReference>
<dbReference type="GO" id="GO:0097175">
    <property type="term" value="P:1,6-anhydro-N-acetyl-beta-muramic acid catabolic process"/>
    <property type="evidence" value="ECO:0007669"/>
    <property type="project" value="UniProtKB-UniRule"/>
</dbReference>
<dbReference type="GO" id="GO:0006040">
    <property type="term" value="P:amino sugar metabolic process"/>
    <property type="evidence" value="ECO:0007669"/>
    <property type="project" value="InterPro"/>
</dbReference>
<dbReference type="GO" id="GO:0009254">
    <property type="term" value="P:peptidoglycan turnover"/>
    <property type="evidence" value="ECO:0007669"/>
    <property type="project" value="UniProtKB-UniRule"/>
</dbReference>
<dbReference type="Gene3D" id="3.30.420.40">
    <property type="match status" value="2"/>
</dbReference>
<dbReference type="HAMAP" id="MF_01270">
    <property type="entry name" value="AnhMurNAc_kinase"/>
    <property type="match status" value="1"/>
</dbReference>
<dbReference type="InterPro" id="IPR005338">
    <property type="entry name" value="Anhydro_N_Ac-Mur_kinase"/>
</dbReference>
<dbReference type="InterPro" id="IPR043129">
    <property type="entry name" value="ATPase_NBD"/>
</dbReference>
<dbReference type="NCBIfam" id="NF007141">
    <property type="entry name" value="PRK09585.1-5"/>
    <property type="match status" value="1"/>
</dbReference>
<dbReference type="PANTHER" id="PTHR30605">
    <property type="entry name" value="ANHYDRO-N-ACETYLMURAMIC ACID KINASE"/>
    <property type="match status" value="1"/>
</dbReference>
<dbReference type="PANTHER" id="PTHR30605:SF0">
    <property type="entry name" value="ANHYDRO-N-ACETYLMURAMIC ACID KINASE"/>
    <property type="match status" value="1"/>
</dbReference>
<dbReference type="Pfam" id="PF03702">
    <property type="entry name" value="AnmK"/>
    <property type="match status" value="1"/>
</dbReference>
<dbReference type="SUPFAM" id="SSF53067">
    <property type="entry name" value="Actin-like ATPase domain"/>
    <property type="match status" value="1"/>
</dbReference>
<reference key="1">
    <citation type="journal article" date="2007" name="J. Bacteriol.">
        <title>The complete genome sequence of Roseobacter denitrificans reveals a mixotrophic rather than photosynthetic metabolism.</title>
        <authorList>
            <person name="Swingley W.D."/>
            <person name="Sadekar S."/>
            <person name="Mastrian S.D."/>
            <person name="Matthies H.J."/>
            <person name="Hao J."/>
            <person name="Ramos H."/>
            <person name="Acharya C.R."/>
            <person name="Conrad A.L."/>
            <person name="Taylor H.L."/>
            <person name="Dejesa L.C."/>
            <person name="Shah M.K."/>
            <person name="O'Huallachain M.E."/>
            <person name="Lince M.T."/>
            <person name="Blankenship R.E."/>
            <person name="Beatty J.T."/>
            <person name="Touchman J.W."/>
        </authorList>
    </citation>
    <scope>NUCLEOTIDE SEQUENCE [LARGE SCALE GENOMIC DNA]</scope>
    <source>
        <strain>ATCC 33942 / OCh 114</strain>
    </source>
</reference>
<feature type="chain" id="PRO_0000250050" description="Anhydro-N-acetylmuramic acid kinase">
    <location>
        <begin position="1"/>
        <end position="377"/>
    </location>
</feature>
<feature type="binding site" evidence="1">
    <location>
        <begin position="19"/>
        <end position="26"/>
    </location>
    <ligand>
        <name>ATP</name>
        <dbReference type="ChEBI" id="CHEBI:30616"/>
    </ligand>
</feature>
<organism>
    <name type="scientific">Roseobacter denitrificans (strain ATCC 33942 / OCh 114)</name>
    <name type="common">Erythrobacter sp. (strain OCh 114)</name>
    <name type="synonym">Roseobacter denitrificans</name>
    <dbReference type="NCBI Taxonomy" id="375451"/>
    <lineage>
        <taxon>Bacteria</taxon>
        <taxon>Pseudomonadati</taxon>
        <taxon>Pseudomonadota</taxon>
        <taxon>Alphaproteobacteria</taxon>
        <taxon>Rhodobacterales</taxon>
        <taxon>Roseobacteraceae</taxon>
        <taxon>Roseobacter</taxon>
    </lineage>
</organism>
<sequence>MESAIAKTGPITALGAMSGTSLDGVDAAIVVTDGVAIDGFGASAYEPYSDAQRAVLAKALGQWQGADVEAATGVIEQVHRTVLARFQQARLIGFHGQTLAHAPHTQGTLQVGDGAWLATALDRPVIWDFRTRDVEMGGEGAPLAPFFHFACAKYIGATQPLAFLNLGGVGNLTYVDPSFARPEEVGALLAFDTGPANAPVNDLVQARLGLAYDRDGQVAREGTVCQRVLERALTAPYFARIPPKSLDRNDFSQIVDLVDTLPDADAVATLTALSAAAVSQGVRHCPQVPQQVLVTGGGRKNPVLMEMLQSMLACPVKPVEDVGLDGDMLEAQAFAYLGVRVARGLPTSCPGTTGVRAPVGGGRISYPGTAAMAAQTG</sequence>
<name>ANMK_ROSDO</name>
<gene>
    <name evidence="1" type="primary">anmK</name>
    <name type="ordered locus">RD1_3145</name>
</gene>
<comment type="function">
    <text evidence="1">Catalyzes the specific phosphorylation of 1,6-anhydro-N-acetylmuramic acid (anhMurNAc) with the simultaneous cleavage of the 1,6-anhydro ring, generating MurNAc-6-P. Is required for the utilization of anhMurNAc either imported from the medium or derived from its own cell wall murein, and thus plays a role in cell wall recycling.</text>
</comment>
<comment type="catalytic activity">
    <reaction evidence="1">
        <text>1,6-anhydro-N-acetyl-beta-muramate + ATP + H2O = N-acetyl-D-muramate 6-phosphate + ADP + H(+)</text>
        <dbReference type="Rhea" id="RHEA:24952"/>
        <dbReference type="ChEBI" id="CHEBI:15377"/>
        <dbReference type="ChEBI" id="CHEBI:15378"/>
        <dbReference type="ChEBI" id="CHEBI:30616"/>
        <dbReference type="ChEBI" id="CHEBI:58690"/>
        <dbReference type="ChEBI" id="CHEBI:58722"/>
        <dbReference type="ChEBI" id="CHEBI:456216"/>
        <dbReference type="EC" id="2.7.1.170"/>
    </reaction>
</comment>
<comment type="pathway">
    <text evidence="1">Amino-sugar metabolism; 1,6-anhydro-N-acetylmuramate degradation.</text>
</comment>
<comment type="pathway">
    <text evidence="1">Cell wall biogenesis; peptidoglycan recycling.</text>
</comment>
<comment type="similarity">
    <text evidence="1">Belongs to the anhydro-N-acetylmuramic acid kinase family.</text>
</comment>
<proteinExistence type="inferred from homology"/>
<protein>
    <recommendedName>
        <fullName evidence="1">Anhydro-N-acetylmuramic acid kinase</fullName>
        <ecNumber evidence="1">2.7.1.170</ecNumber>
    </recommendedName>
    <alternativeName>
        <fullName evidence="1">AnhMurNAc kinase</fullName>
    </alternativeName>
</protein>
<evidence type="ECO:0000255" key="1">
    <source>
        <dbReference type="HAMAP-Rule" id="MF_01270"/>
    </source>
</evidence>
<keyword id="KW-0067">ATP-binding</keyword>
<keyword id="KW-0119">Carbohydrate metabolism</keyword>
<keyword id="KW-0418">Kinase</keyword>
<keyword id="KW-0547">Nucleotide-binding</keyword>
<keyword id="KW-1185">Reference proteome</keyword>
<keyword id="KW-0808">Transferase</keyword>
<accession>Q164E0</accession>